<accession>P0AEC8</accession>
<accession>P39272</accession>
<accession>P76795</accession>
<accession>Q2M6H9</accession>
<dbReference type="EC" id="2.7.13.3" evidence="15"/>
<dbReference type="EMBL" id="U14003">
    <property type="protein sequence ID" value="AAA97025.1"/>
    <property type="molecule type" value="Genomic_DNA"/>
</dbReference>
<dbReference type="EMBL" id="U00096">
    <property type="protein sequence ID" value="AAC77086.1"/>
    <property type="molecule type" value="Genomic_DNA"/>
</dbReference>
<dbReference type="EMBL" id="AP009048">
    <property type="protein sequence ID" value="BAE78127.1"/>
    <property type="molecule type" value="Genomic_DNA"/>
</dbReference>
<dbReference type="PIR" id="D65222">
    <property type="entry name" value="D65222"/>
</dbReference>
<dbReference type="RefSeq" id="NP_418549.1">
    <property type="nucleotide sequence ID" value="NC_000913.3"/>
</dbReference>
<dbReference type="RefSeq" id="WP_001216477.1">
    <property type="nucleotide sequence ID" value="NZ_SSZK01000018.1"/>
</dbReference>
<dbReference type="PDB" id="1OJG">
    <property type="method" value="NMR"/>
    <property type="chains" value="A=45-180"/>
</dbReference>
<dbReference type="PDB" id="2W0N">
    <property type="method" value="NMR"/>
    <property type="chains" value="A=211-325"/>
</dbReference>
<dbReference type="PDB" id="3BY8">
    <property type="method" value="X-ray"/>
    <property type="resolution" value="1.45 A"/>
    <property type="chains" value="A=42-181"/>
</dbReference>
<dbReference type="PDBsum" id="1OJG"/>
<dbReference type="PDBsum" id="2W0N"/>
<dbReference type="PDBsum" id="3BY8"/>
<dbReference type="BMRB" id="P0AEC8"/>
<dbReference type="SMR" id="P0AEC8"/>
<dbReference type="BioGRID" id="4261981">
    <property type="interactions" value="14"/>
</dbReference>
<dbReference type="DIP" id="DIP-9414N"/>
<dbReference type="FunCoup" id="P0AEC8">
    <property type="interactions" value="244"/>
</dbReference>
<dbReference type="IntAct" id="P0AEC8">
    <property type="interactions" value="3"/>
</dbReference>
<dbReference type="STRING" id="511145.b4125"/>
<dbReference type="jPOST" id="P0AEC8"/>
<dbReference type="PaxDb" id="511145-b4125"/>
<dbReference type="EnsemblBacteria" id="AAC77086">
    <property type="protein sequence ID" value="AAC77086"/>
    <property type="gene ID" value="b4125"/>
</dbReference>
<dbReference type="GeneID" id="948639"/>
<dbReference type="KEGG" id="ecj:JW4086"/>
<dbReference type="KEGG" id="eco:b4125"/>
<dbReference type="KEGG" id="ecoc:C3026_22295"/>
<dbReference type="PATRIC" id="fig|1411691.4.peg.2575"/>
<dbReference type="EchoBASE" id="EB2358"/>
<dbReference type="eggNOG" id="COG3290">
    <property type="taxonomic scope" value="Bacteria"/>
</dbReference>
<dbReference type="HOGENOM" id="CLU_020211_11_2_6"/>
<dbReference type="InParanoid" id="P0AEC8"/>
<dbReference type="OMA" id="HYQNGWL"/>
<dbReference type="OrthoDB" id="9792686at2"/>
<dbReference type="PhylomeDB" id="P0AEC8"/>
<dbReference type="BioCyc" id="EcoCyc:DCUS-MONOMER"/>
<dbReference type="BioCyc" id="MetaCyc:DCUS-MONOMER"/>
<dbReference type="BRENDA" id="2.7.13.3">
    <property type="organism ID" value="2026"/>
</dbReference>
<dbReference type="EvolutionaryTrace" id="P0AEC8"/>
<dbReference type="PRO" id="PR:P0AEC8"/>
<dbReference type="Proteomes" id="UP000000625">
    <property type="component" value="Chromosome"/>
</dbReference>
<dbReference type="GO" id="GO:0005829">
    <property type="term" value="C:cytosol"/>
    <property type="evidence" value="ECO:0000314"/>
    <property type="project" value="EcoCyc"/>
</dbReference>
<dbReference type="GO" id="GO:0030288">
    <property type="term" value="C:outer membrane-bounded periplasmic space"/>
    <property type="evidence" value="ECO:0000314"/>
    <property type="project" value="EcoCyc"/>
</dbReference>
<dbReference type="GO" id="GO:0005886">
    <property type="term" value="C:plasma membrane"/>
    <property type="evidence" value="ECO:0000314"/>
    <property type="project" value="EcoliWiki"/>
</dbReference>
<dbReference type="GO" id="GO:0009365">
    <property type="term" value="C:protein histidine kinase complex"/>
    <property type="evidence" value="ECO:0000314"/>
    <property type="project" value="EcoCyc"/>
</dbReference>
<dbReference type="GO" id="GO:0005524">
    <property type="term" value="F:ATP binding"/>
    <property type="evidence" value="ECO:0007669"/>
    <property type="project" value="UniProtKB-KW"/>
</dbReference>
<dbReference type="GO" id="GO:0042802">
    <property type="term" value="F:identical protein binding"/>
    <property type="evidence" value="ECO:0000353"/>
    <property type="project" value="IntAct"/>
</dbReference>
<dbReference type="GO" id="GO:0000155">
    <property type="term" value="F:phosphorelay sensor kinase activity"/>
    <property type="evidence" value="ECO:0000314"/>
    <property type="project" value="EcoCyc"/>
</dbReference>
<dbReference type="GO" id="GO:0004673">
    <property type="term" value="F:protein histidine kinase activity"/>
    <property type="evidence" value="ECO:0000314"/>
    <property type="project" value="EcoliWiki"/>
</dbReference>
<dbReference type="GO" id="GO:0000160">
    <property type="term" value="P:phosphorelay signal transduction system"/>
    <property type="evidence" value="ECO:0000314"/>
    <property type="project" value="EcoliWiki"/>
</dbReference>
<dbReference type="GO" id="GO:0006355">
    <property type="term" value="P:regulation of DNA-templated transcription"/>
    <property type="evidence" value="ECO:0000314"/>
    <property type="project" value="EcoliWiki"/>
</dbReference>
<dbReference type="GO" id="GO:0007165">
    <property type="term" value="P:signal transduction"/>
    <property type="evidence" value="ECO:0000314"/>
    <property type="project" value="EcoCyc"/>
</dbReference>
<dbReference type="CDD" id="cd16915">
    <property type="entry name" value="HATPase_DpiB-CitA-like"/>
    <property type="match status" value="1"/>
</dbReference>
<dbReference type="CDD" id="cd00130">
    <property type="entry name" value="PAS"/>
    <property type="match status" value="1"/>
</dbReference>
<dbReference type="FunFam" id="1.10.287.130:FF:000011">
    <property type="entry name" value="Sensor histidine kinase DcuS"/>
    <property type="match status" value="1"/>
</dbReference>
<dbReference type="FunFam" id="3.30.450.20:FF:000018">
    <property type="entry name" value="Sensor histidine kinase DcuS"/>
    <property type="match status" value="1"/>
</dbReference>
<dbReference type="FunFam" id="3.30.450.20:FF:000045">
    <property type="entry name" value="Sensor histidine kinase DcuS"/>
    <property type="match status" value="1"/>
</dbReference>
<dbReference type="FunFam" id="3.30.565.10:FF:000041">
    <property type="entry name" value="Sensor histidine kinase DcuS"/>
    <property type="match status" value="1"/>
</dbReference>
<dbReference type="Gene3D" id="1.10.287.130">
    <property type="match status" value="1"/>
</dbReference>
<dbReference type="Gene3D" id="3.30.565.10">
    <property type="entry name" value="Histidine kinase-like ATPase, C-terminal domain"/>
    <property type="match status" value="1"/>
</dbReference>
<dbReference type="Gene3D" id="3.30.450.20">
    <property type="entry name" value="PAS domain"/>
    <property type="match status" value="2"/>
</dbReference>
<dbReference type="InterPro" id="IPR036890">
    <property type="entry name" value="HATPase_C_sf"/>
</dbReference>
<dbReference type="InterPro" id="IPR005467">
    <property type="entry name" value="His_kinase_dom"/>
</dbReference>
<dbReference type="InterPro" id="IPR000014">
    <property type="entry name" value="PAS"/>
</dbReference>
<dbReference type="InterPro" id="IPR035965">
    <property type="entry name" value="PAS-like_dom_sf"/>
</dbReference>
<dbReference type="InterPro" id="IPR013767">
    <property type="entry name" value="PAS_fold"/>
</dbReference>
<dbReference type="InterPro" id="IPR033463">
    <property type="entry name" value="sCache_3"/>
</dbReference>
<dbReference type="InterPro" id="IPR029151">
    <property type="entry name" value="Sensor-like_sf"/>
</dbReference>
<dbReference type="InterPro" id="IPR004358">
    <property type="entry name" value="Sig_transdc_His_kin-like_C"/>
</dbReference>
<dbReference type="InterPro" id="IPR016120">
    <property type="entry name" value="Sig_transdc_His_kin_SpoOB"/>
</dbReference>
<dbReference type="InterPro" id="IPR039506">
    <property type="entry name" value="SPOB_a"/>
</dbReference>
<dbReference type="NCBIfam" id="NF008298">
    <property type="entry name" value="PRK11086.1"/>
    <property type="match status" value="1"/>
</dbReference>
<dbReference type="PANTHER" id="PTHR43547:SF10">
    <property type="entry name" value="SENSOR HISTIDINE KINASE DCUS"/>
    <property type="match status" value="1"/>
</dbReference>
<dbReference type="PANTHER" id="PTHR43547">
    <property type="entry name" value="TWO-COMPONENT HISTIDINE KINASE"/>
    <property type="match status" value="1"/>
</dbReference>
<dbReference type="Pfam" id="PF02518">
    <property type="entry name" value="HATPase_c"/>
    <property type="match status" value="1"/>
</dbReference>
<dbReference type="Pfam" id="PF00989">
    <property type="entry name" value="PAS"/>
    <property type="match status" value="1"/>
</dbReference>
<dbReference type="Pfam" id="PF17203">
    <property type="entry name" value="sCache_3_2"/>
    <property type="match status" value="1"/>
</dbReference>
<dbReference type="Pfam" id="PF14689">
    <property type="entry name" value="SPOB_a"/>
    <property type="match status" value="1"/>
</dbReference>
<dbReference type="PRINTS" id="PR00344">
    <property type="entry name" value="BCTRLSENSOR"/>
</dbReference>
<dbReference type="SMART" id="SM00387">
    <property type="entry name" value="HATPase_c"/>
    <property type="match status" value="1"/>
</dbReference>
<dbReference type="SMART" id="SM00091">
    <property type="entry name" value="PAS"/>
    <property type="match status" value="1"/>
</dbReference>
<dbReference type="SUPFAM" id="SSF55874">
    <property type="entry name" value="ATPase domain of HSP90 chaperone/DNA topoisomerase II/histidine kinase"/>
    <property type="match status" value="1"/>
</dbReference>
<dbReference type="SUPFAM" id="SSF55785">
    <property type="entry name" value="PYP-like sensor domain (PAS domain)"/>
    <property type="match status" value="1"/>
</dbReference>
<dbReference type="SUPFAM" id="SSF103190">
    <property type="entry name" value="Sensory domain-like"/>
    <property type="match status" value="1"/>
</dbReference>
<dbReference type="SUPFAM" id="SSF55890">
    <property type="entry name" value="Sporulation response regulatory protein Spo0B"/>
    <property type="match status" value="1"/>
</dbReference>
<dbReference type="PROSITE" id="PS50109">
    <property type="entry name" value="HIS_KIN"/>
    <property type="match status" value="1"/>
</dbReference>
<dbReference type="PROSITE" id="PS50112">
    <property type="entry name" value="PAS"/>
    <property type="match status" value="1"/>
</dbReference>
<organism>
    <name type="scientific">Escherichia coli (strain K12)</name>
    <dbReference type="NCBI Taxonomy" id="83333"/>
    <lineage>
        <taxon>Bacteria</taxon>
        <taxon>Pseudomonadati</taxon>
        <taxon>Pseudomonadota</taxon>
        <taxon>Gammaproteobacteria</taxon>
        <taxon>Enterobacterales</taxon>
        <taxon>Enterobacteriaceae</taxon>
        <taxon>Escherichia</taxon>
    </lineage>
</organism>
<feature type="chain" id="PRO_0000074750" description="Sensor histidine kinase DcuS">
    <location>
        <begin position="1"/>
        <end position="543"/>
    </location>
</feature>
<feature type="topological domain" description="Cytoplasmic" evidence="14">
    <location>
        <begin position="1"/>
        <end position="20"/>
    </location>
</feature>
<feature type="transmembrane region" description="Helical" evidence="1">
    <location>
        <begin position="21"/>
        <end position="41"/>
    </location>
</feature>
<feature type="topological domain" description="Periplasmic" evidence="14">
    <location>
        <begin position="42"/>
        <end position="181"/>
    </location>
</feature>
<feature type="transmembrane region" description="Helical" evidence="1">
    <location>
        <begin position="182"/>
        <end position="202"/>
    </location>
</feature>
<feature type="topological domain" description="Cytoplasmic" evidence="6 18">
    <location>
        <begin position="203"/>
        <end position="543"/>
    </location>
</feature>
<feature type="domain" description="PAS" evidence="3">
    <location>
        <begin position="212"/>
        <end position="323"/>
    </location>
</feature>
<feature type="domain" description="Histidine kinase" evidence="2">
    <location>
        <begin position="346"/>
        <end position="538"/>
    </location>
</feature>
<feature type="binding site" evidence="7 21">
    <location>
        <begin position="107"/>
        <end position="110"/>
    </location>
    <ligand>
        <name>(R)-malate</name>
        <dbReference type="ChEBI" id="CHEBI:15588"/>
    </ligand>
</feature>
<feature type="binding site" evidence="7 21">
    <location>
        <position position="121"/>
    </location>
    <ligand>
        <name>(R)-malate</name>
        <dbReference type="ChEBI" id="CHEBI:15588"/>
    </ligand>
</feature>
<feature type="binding site" evidence="7 21">
    <location>
        <begin position="140"/>
        <end position="142"/>
    </location>
    <ligand>
        <name>(R)-malate</name>
        <dbReference type="ChEBI" id="CHEBI:15588"/>
    </ligand>
</feature>
<feature type="binding site" evidence="7 21">
    <location>
        <position position="147"/>
    </location>
    <ligand>
        <name>(R)-malate</name>
        <dbReference type="ChEBI" id="CHEBI:15588"/>
    </ligand>
</feature>
<feature type="modified residue" description="Phosphohistidine; by autocatalysis" evidence="2">
    <location>
        <position position="349"/>
    </location>
</feature>
<feature type="mutagenesis site" description="Abolishes the stimulation by fumarate to the same extent as complete deletion of the dcuS gene." evidence="5">
    <original>R</original>
    <variation>A</variation>
    <location>
        <position position="107"/>
    </location>
</feature>
<feature type="mutagenesis site" description="Abolishes the stimulation by fumarate to the same extent as complete deletion of the dcuS gene." evidence="5">
    <original>H</original>
    <variation>A</variation>
    <location>
        <position position="110"/>
    </location>
</feature>
<feature type="mutagenesis site" description="Abolishes the stimulation by fumarate to the same extent as complete deletion of the dcuS gene." evidence="5">
    <original>R</original>
    <variation>A</variation>
    <location>
        <position position="147"/>
    </location>
</feature>
<feature type="mutagenesis site" description="Causes constitutive active state of the kinase, leading to constitutive expression of a target gene, without addition of C4-dicarboxylates." evidence="8">
    <original>N</original>
    <variation>A</variation>
    <variation>D</variation>
    <variation>G</variation>
    <location>
        <position position="248"/>
    </location>
</feature>
<feature type="mutagenesis site" description="Causes constitutive active state of the kinase, leading to constitutive expression of a target gene, without addition of C4-dicarboxylates." evidence="8">
    <original>N</original>
    <variation>D</variation>
    <location>
        <position position="304"/>
    </location>
</feature>
<feature type="helix" evidence="24">
    <location>
        <begin position="47"/>
        <end position="64"/>
    </location>
</feature>
<feature type="helix" evidence="24">
    <location>
        <begin position="67"/>
        <end position="72"/>
    </location>
</feature>
<feature type="helix" evidence="24">
    <location>
        <begin position="77"/>
        <end position="79"/>
    </location>
</feature>
<feature type="helix" evidence="24">
    <location>
        <begin position="82"/>
        <end position="92"/>
    </location>
</feature>
<feature type="strand" evidence="24">
    <location>
        <begin position="96"/>
        <end position="102"/>
    </location>
</feature>
<feature type="strand" evidence="24">
    <location>
        <begin position="106"/>
        <end position="108"/>
    </location>
</feature>
<feature type="helix" evidence="24">
    <location>
        <begin position="113"/>
        <end position="115"/>
    </location>
</feature>
<feature type="helix" evidence="24">
    <location>
        <begin position="123"/>
        <end position="125"/>
    </location>
</feature>
<feature type="helix" evidence="24">
    <location>
        <begin position="127"/>
        <end position="130"/>
    </location>
</feature>
<feature type="strand" evidence="24">
    <location>
        <begin position="134"/>
        <end position="138"/>
    </location>
</feature>
<feature type="strand" evidence="24">
    <location>
        <begin position="140"/>
        <end position="143"/>
    </location>
</feature>
<feature type="strand" evidence="24">
    <location>
        <begin position="145"/>
        <end position="153"/>
    </location>
</feature>
<feature type="strand" evidence="22">
    <location>
        <begin position="155"/>
        <end position="157"/>
    </location>
</feature>
<feature type="strand" evidence="24">
    <location>
        <begin position="159"/>
        <end position="168"/>
    </location>
</feature>
<feature type="helix" evidence="24">
    <location>
        <begin position="169"/>
        <end position="177"/>
    </location>
</feature>
<feature type="helix" evidence="23">
    <location>
        <begin position="214"/>
        <end position="217"/>
    </location>
</feature>
<feature type="helix" evidence="23">
    <location>
        <begin position="221"/>
        <end position="229"/>
    </location>
</feature>
<feature type="strand" evidence="23">
    <location>
        <begin position="236"/>
        <end position="239"/>
    </location>
</feature>
<feature type="turn" evidence="23">
    <location>
        <begin position="240"/>
        <end position="242"/>
    </location>
</feature>
<feature type="helix" evidence="23">
    <location>
        <begin position="249"/>
        <end position="255"/>
    </location>
</feature>
<feature type="turn" evidence="23">
    <location>
        <begin position="259"/>
        <end position="263"/>
    </location>
</feature>
<feature type="helix" evidence="23">
    <location>
        <begin position="277"/>
        <end position="284"/>
    </location>
</feature>
<feature type="strand" evidence="23">
    <location>
        <begin position="294"/>
        <end position="298"/>
    </location>
</feature>
<feature type="strand" evidence="23">
    <location>
        <begin position="317"/>
        <end position="319"/>
    </location>
</feature>
<protein>
    <recommendedName>
        <fullName evidence="14">Sensor histidine kinase DcuS</fullName>
        <ecNumber evidence="15">2.7.13.3</ecNumber>
    </recommendedName>
    <alternativeName>
        <fullName>Fumarate sensor</fullName>
    </alternativeName>
</protein>
<gene>
    <name evidence="12 13" type="primary">dcuS</name>
    <name type="synonym">yjdH</name>
    <name type="ordered locus">b4125</name>
    <name type="ordered locus">JW4086</name>
</gene>
<reference key="1">
    <citation type="journal article" date="1995" name="Nucleic Acids Res.">
        <title>Analysis of the Escherichia coli genome VI: DNA sequence of the region from 92.8 through 100 minutes.</title>
        <authorList>
            <person name="Burland V.D."/>
            <person name="Plunkett G. III"/>
            <person name="Sofia H.J."/>
            <person name="Daniels D.L."/>
            <person name="Blattner F.R."/>
        </authorList>
    </citation>
    <scope>NUCLEOTIDE SEQUENCE [LARGE SCALE GENOMIC DNA]</scope>
    <source>
        <strain>K12 / MG1655 / ATCC 47076</strain>
    </source>
</reference>
<reference key="2">
    <citation type="journal article" date="1997" name="Science">
        <title>The complete genome sequence of Escherichia coli K-12.</title>
        <authorList>
            <person name="Blattner F.R."/>
            <person name="Plunkett G. III"/>
            <person name="Bloch C.A."/>
            <person name="Perna N.T."/>
            <person name="Burland V."/>
            <person name="Riley M."/>
            <person name="Collado-Vides J."/>
            <person name="Glasner J.D."/>
            <person name="Rode C.K."/>
            <person name="Mayhew G.F."/>
            <person name="Gregor J."/>
            <person name="Davis N.W."/>
            <person name="Kirkpatrick H.A."/>
            <person name="Goeden M.A."/>
            <person name="Rose D.J."/>
            <person name="Mau B."/>
            <person name="Shao Y."/>
        </authorList>
    </citation>
    <scope>NUCLEOTIDE SEQUENCE [LARGE SCALE GENOMIC DNA]</scope>
    <source>
        <strain>K12 / MG1655 / ATCC 47076</strain>
    </source>
</reference>
<reference key="3">
    <citation type="journal article" date="2006" name="Mol. Syst. Biol.">
        <title>Highly accurate genome sequences of Escherichia coli K-12 strains MG1655 and W3110.</title>
        <authorList>
            <person name="Hayashi K."/>
            <person name="Morooka N."/>
            <person name="Yamamoto Y."/>
            <person name="Fujita K."/>
            <person name="Isono K."/>
            <person name="Choi S."/>
            <person name="Ohtsubo E."/>
            <person name="Baba T."/>
            <person name="Wanner B.L."/>
            <person name="Mori H."/>
            <person name="Horiuchi T."/>
        </authorList>
    </citation>
    <scope>NUCLEOTIDE SEQUENCE [LARGE SCALE GENOMIC DNA]</scope>
    <source>
        <strain>K12 / W3110 / ATCC 27325 / DSM 5911</strain>
    </source>
</reference>
<reference key="4">
    <citation type="journal article" date="1998" name="J. Bacteriol.">
        <title>Fumarate regulation of gene expression in Escherichia coli by the DcuSR (dcuSR genes) two-component regulatory system.</title>
        <authorList>
            <person name="Zientz E."/>
            <person name="Bongaerts J."/>
            <person name="Unden G."/>
        </authorList>
    </citation>
    <scope>FUNCTION</scope>
    <source>
        <strain>K12 / MC4100 / ATCC 35695 / DSM 6574</strain>
    </source>
</reference>
<reference key="5">
    <citation type="journal article" date="1999" name="J. Bacteriol.">
        <title>Identification and characterization of a two-component sensor-kinase and response-regulator system (DcuS-DcuR) controlling gene expression in response to C4-dicarboxylates in Escherichia coli.</title>
        <authorList>
            <person name="Golby P."/>
            <person name="Davies S."/>
            <person name="Kelly D.J."/>
            <person name="Guest J.R."/>
            <person name="Andrews S.C."/>
        </authorList>
    </citation>
    <scope>FUNCTION</scope>
    <scope>TOPOLOGY</scope>
    <source>
        <strain>K12 / MC4100 / ATCC 35695 / DSM 6574</strain>
    </source>
</reference>
<reference key="6">
    <citation type="journal article" date="2002" name="J. Biol. Chem.">
        <title>Function of DcuS from Escherichia coli as a fumarate-stimulated histidine protein kinase in vitro.</title>
        <authorList>
            <person name="Janausch I.G."/>
            <person name="Garcia-Moreno I."/>
            <person name="Unden G."/>
        </authorList>
    </citation>
    <scope>FUNCTION</scope>
    <scope>ACTIVITY REGULATION</scope>
    <scope>SUBCELLULAR LOCATION</scope>
    <scope>AUTOPHOSPHORYLATION</scope>
    <source>
        <strain>K12 / AN387</strain>
    </source>
</reference>
<reference key="7">
    <citation type="journal article" date="2005" name="Science">
        <title>Global topology analysis of the Escherichia coli inner membrane proteome.</title>
        <authorList>
            <person name="Daley D.O."/>
            <person name="Rapp M."/>
            <person name="Granseth E."/>
            <person name="Melen K."/>
            <person name="Drew D."/>
            <person name="von Heijne G."/>
        </authorList>
    </citation>
    <scope>TOPOLOGY [LARGE SCALE ANALYSIS]</scope>
    <scope>SUBCELLULAR LOCATION</scope>
    <source>
        <strain>K12 / MG1655 / ATCC 47076</strain>
    </source>
</reference>
<reference key="8">
    <citation type="journal article" date="2016" name="Environ. Microbiol.">
        <title>Conversion of the sensor kinase DcuS of Escherichia coli of the DcuB/DcuS sensor complex to the C4-dicarboxylate responsive form by the transporter DcuB.</title>
        <authorList>
            <person name="Woerner S."/>
            <person name="Strecker A."/>
            <person name="Monzel C."/>
            <person name="Zeltner M."/>
            <person name="Witan J."/>
            <person name="Ebert-Jung A."/>
            <person name="Unden G."/>
        </authorList>
    </citation>
    <scope>ACTIVITY REGULATION</scope>
    <scope>INTERACTION WITH DCTA AND DCUB</scope>
</reference>
<reference evidence="19" key="9">
    <citation type="journal article" date="2003" name="J. Biol. Chem.">
        <title>The NMR structure of the sensory domain of the membranous two-component fumarate sensor (histidine protein kinase) DcuS of Escherichia coli.</title>
        <authorList>
            <person name="Pappalardo L."/>
            <person name="Janausch I.G."/>
            <person name="Vijayan V."/>
            <person name="Zientz E."/>
            <person name="Junker J."/>
            <person name="Peti W."/>
            <person name="Zweckstetter M."/>
            <person name="Unden G."/>
            <person name="Griesinger C."/>
        </authorList>
    </citation>
    <scope>STRUCTURE BY NMR OF 45-180</scope>
    <scope>DOMAIN PERIPLASMIC SENSING</scope>
    <scope>MUTAGENESIS OF ARG-107; HIS-110 AND ARG-147</scope>
    <source>
        <strain>K12</strain>
    </source>
</reference>
<reference evidence="21" key="10">
    <citation type="journal article" date="2008" name="J. Biol. Chem.">
        <title>Crystal structures of C4-dicarboxylate ligand complexes with sensor domains of histidine kinases DcuS and DctB.</title>
        <authorList>
            <person name="Cheung J."/>
            <person name="Hendrickson W.A."/>
        </authorList>
    </citation>
    <scope>X-RAY CRYSTALLOGRAPHY (1.45 ANGSTROMS) OF 42-181 IN COMPLEX WITH (R)-MALATE</scope>
    <scope>DOMAIN PERIPLASMIC SENSING</scope>
    <scope>SUBUNIT</scope>
    <source>
        <strain>K12</strain>
    </source>
</reference>
<reference evidence="20" key="11">
    <citation type="journal article" date="2008" name="Nat. Struct. Mol. Biol.">
        <title>Plasticity of the PAS domain and a potential role for signal transduction in the histidine kinase DcuS.</title>
        <authorList>
            <person name="Etzkorn M."/>
            <person name="Kneuper H."/>
            <person name="Dunnwald P."/>
            <person name="Vijayan V."/>
            <person name="Kramer J."/>
            <person name="Griesinger C."/>
            <person name="Becker S."/>
            <person name="Unden G."/>
            <person name="Baldus M."/>
        </authorList>
    </citation>
    <scope>STRUCTURE BY NMR OF 211-325</scope>
    <scope>DOMAIN CYTOPLASMIC PAS</scope>
    <scope>SUBUNIT</scope>
    <scope>MUTAGENESIS OF ASN-248 AND ASN-304</scope>
</reference>
<proteinExistence type="evidence at protein level"/>
<name>DCUS_ECOLI</name>
<evidence type="ECO:0000255" key="1"/>
<evidence type="ECO:0000255" key="2">
    <source>
        <dbReference type="PROSITE-ProRule" id="PRU00107"/>
    </source>
</evidence>
<evidence type="ECO:0000255" key="3">
    <source>
        <dbReference type="PROSITE-ProRule" id="PRU00140"/>
    </source>
</evidence>
<evidence type="ECO:0000269" key="4">
    <source>
    </source>
</evidence>
<evidence type="ECO:0000269" key="5">
    <source>
    </source>
</evidence>
<evidence type="ECO:0000269" key="6">
    <source>
    </source>
</evidence>
<evidence type="ECO:0000269" key="7">
    <source>
    </source>
</evidence>
<evidence type="ECO:0000269" key="8">
    <source>
    </source>
</evidence>
<evidence type="ECO:0000269" key="9">
    <source>
    </source>
</evidence>
<evidence type="ECO:0000269" key="10">
    <source>
    </source>
</evidence>
<evidence type="ECO:0000269" key="11">
    <source>
    </source>
</evidence>
<evidence type="ECO:0000303" key="12">
    <source>
    </source>
</evidence>
<evidence type="ECO:0000303" key="13">
    <source>
    </source>
</evidence>
<evidence type="ECO:0000305" key="14"/>
<evidence type="ECO:0000305" key="15">
    <source>
    </source>
</evidence>
<evidence type="ECO:0000305" key="16">
    <source>
    </source>
</evidence>
<evidence type="ECO:0000305" key="17">
    <source>
    </source>
</evidence>
<evidence type="ECO:0000305" key="18">
    <source>
    </source>
</evidence>
<evidence type="ECO:0007744" key="19">
    <source>
        <dbReference type="PDB" id="1OJG"/>
    </source>
</evidence>
<evidence type="ECO:0007744" key="20">
    <source>
        <dbReference type="PDB" id="2W0N"/>
    </source>
</evidence>
<evidence type="ECO:0007744" key="21">
    <source>
        <dbReference type="PDB" id="3BY8"/>
    </source>
</evidence>
<evidence type="ECO:0007829" key="22">
    <source>
        <dbReference type="PDB" id="1OJG"/>
    </source>
</evidence>
<evidence type="ECO:0007829" key="23">
    <source>
        <dbReference type="PDB" id="2W0N"/>
    </source>
</evidence>
<evidence type="ECO:0007829" key="24">
    <source>
        <dbReference type="PDB" id="3BY8"/>
    </source>
</evidence>
<keyword id="KW-0002">3D-structure</keyword>
<keyword id="KW-0067">ATP-binding</keyword>
<keyword id="KW-0997">Cell inner membrane</keyword>
<keyword id="KW-1003">Cell membrane</keyword>
<keyword id="KW-0418">Kinase</keyword>
<keyword id="KW-0472">Membrane</keyword>
<keyword id="KW-0547">Nucleotide-binding</keyword>
<keyword id="KW-0597">Phosphoprotein</keyword>
<keyword id="KW-1185">Reference proteome</keyword>
<keyword id="KW-0808">Transferase</keyword>
<keyword id="KW-0812">Transmembrane</keyword>
<keyword id="KW-1133">Transmembrane helix</keyword>
<keyword id="KW-0902">Two-component regulatory system</keyword>
<sequence length="543" mass="60551">MRHSLPYRMLRKRPMKLSTTVILMVSAVLFSVLLVVHLIYFSQISDMTRDGLANKALAVARTLADSPEIRQGLQKKPQESGIQAIAEAVRKRNDLLFIVVTDMQSLRYSHPEAQRIGQPFKGDDILKALNGEENVAINRGFLAQALRVFTPIYDENHKQIGVVAIGLELSRVTQQINDSRWSIIWSVLFGMLVGLIGTCILVKVLKKILFGLEPYEISTLFEQRQAMLQSIKEGVVAVDDRGEVTLINDAAQELLNYRKSQDDEKLSTLSHSWSQVVDVSEVLRDGTPRRDEEITIKDRLLLINTVPVRSNGVIIGAISTFRDKTEVRKLMQRLDGLVNYADALRERSHEFMNKLHVILGLLHLKSYKQLEDYILKTANNYQEEIGSLLGKIKSPVIAGFLISKINRATDLGHTLILNSESQLPDSGSEDQVATLITTLGNLIENALEALGPEPGGEISVTLHYRHGWLHCEVNDDGPGIAPDKIDHIFDKGVSTKGSERGVGLALVKQQVENLGGSIAVESEPGIFTQFFVQIPWDGERSNR</sequence>
<comment type="function">
    <text evidence="4 10 11">Member of the two-component regulatory system DcuR/DcuS (PubMed:12167640, PubMed:9765574, PubMed:9973351). Involved in the C4-dicarboxylate-stimulated regulation of the genes encoding the anaerobic fumarate respiratory system (frdABCD; nuoAN; dcuB; sdhCDAB; etc.) (PubMed:9765574, PubMed:9973351). Weakly regulates the aerobic C4-dicarboxylate transporter dctA (PubMed:9973351). Activates DcuR by phosphorylation (PubMed:12167640).</text>
</comment>
<comment type="catalytic activity">
    <reaction evidence="15">
        <text>ATP + protein L-histidine = ADP + protein N-phospho-L-histidine.</text>
        <dbReference type="EC" id="2.7.13.3"/>
    </reaction>
</comment>
<comment type="activity regulation">
    <text evidence="4 9">Autophosphorylation is stimulated by the presence of C4-dicarboxylates such as fumarate or succinate (PubMed:12167640). DcuB is required for converting DcuS to the sensory competent state (PubMed:27318186).</text>
</comment>
<comment type="subunit">
    <text evidence="9 16 17">Homodimer (Probable). Interacts with DctA and DcuB (PubMed:27318186). DctA/DcuS and DcuB/DcuS complexes are present both in the absence or presence of fumarate (PubMed:27318186).</text>
</comment>
<comment type="interaction">
    <interactant intactId="EBI-1134683">
        <id>P0AEC8</id>
    </interactant>
    <interactant intactId="EBI-1134683">
        <id>P0AEC8</id>
        <label>dcuS</label>
    </interactant>
    <organismsDiffer>false</organismsDiffer>
    <experiments>8</experiments>
</comment>
<comment type="subcellular location">
    <subcellularLocation>
        <location evidence="4 6">Cell inner membrane</location>
        <topology evidence="1">Multi-pass membrane protein</topology>
    </subcellularLocation>
</comment>
<comment type="domain">
    <text evidence="5 7 8">The periplasmic domain is involved in C4-dicarboxylate binding and sensing. The structural disorder in the cytoplasmic PAS domain has an important role in signal transduction to the kinase domain and may be the decisive structural feature that characterizes the activated kinase.</text>
</comment>
<comment type="PTM">
    <text evidence="4">Autophosphorylated (PubMed:12167640). The phosphoryl group is rapidly transferred to DcuR (PubMed:12167640).</text>
</comment>
<comment type="miscellaneous">
    <text>The region encompassing approximately residues 42 to 181 has been shown to be periplasmic, however exactly which residues are periplasmic is not clear.</text>
</comment>